<gene>
    <name evidence="1" type="primary">rplS</name>
    <name type="ordered locus">Msil_0638</name>
</gene>
<sequence>MNIIAELEAEQAAKLLAGKTIPEFQPGDTVIVNVKVKEGERTRVQAYEGVCIARNGGGLNESFTVRKISYGEGVERVFAIYSPNIDSIKVVRRGKVRRAKLYYLRDRRGKSARIAEKMESPAAKATREAAKKEAKAAKKNAAPAE</sequence>
<organism>
    <name type="scientific">Methylocella silvestris (strain DSM 15510 / CIP 108128 / LMG 27833 / NCIMB 13906 / BL2)</name>
    <dbReference type="NCBI Taxonomy" id="395965"/>
    <lineage>
        <taxon>Bacteria</taxon>
        <taxon>Pseudomonadati</taxon>
        <taxon>Pseudomonadota</taxon>
        <taxon>Alphaproteobacteria</taxon>
        <taxon>Hyphomicrobiales</taxon>
        <taxon>Beijerinckiaceae</taxon>
        <taxon>Methylocella</taxon>
    </lineage>
</organism>
<comment type="function">
    <text evidence="1">This protein is located at the 30S-50S ribosomal subunit interface and may play a role in the structure and function of the aminoacyl-tRNA binding site.</text>
</comment>
<comment type="similarity">
    <text evidence="1">Belongs to the bacterial ribosomal protein bL19 family.</text>
</comment>
<reference key="1">
    <citation type="journal article" date="2010" name="J. Bacteriol.">
        <title>Complete genome sequence of the aerobic facultative methanotroph Methylocella silvestris BL2.</title>
        <authorList>
            <person name="Chen Y."/>
            <person name="Crombie A."/>
            <person name="Rahman M.T."/>
            <person name="Dedysh S.N."/>
            <person name="Liesack W."/>
            <person name="Stott M.B."/>
            <person name="Alam M."/>
            <person name="Theisen A.R."/>
            <person name="Murrell J.C."/>
            <person name="Dunfield P.F."/>
        </authorList>
    </citation>
    <scope>NUCLEOTIDE SEQUENCE [LARGE SCALE GENOMIC DNA]</scope>
    <source>
        <strain>DSM 15510 / CIP 108128 / LMG 27833 / NCIMB 13906 / BL2</strain>
    </source>
</reference>
<protein>
    <recommendedName>
        <fullName evidence="1">Large ribosomal subunit protein bL19</fullName>
    </recommendedName>
    <alternativeName>
        <fullName evidence="3">50S ribosomal protein L19</fullName>
    </alternativeName>
</protein>
<name>RL19_METSB</name>
<accession>B8EN97</accession>
<keyword id="KW-1185">Reference proteome</keyword>
<keyword id="KW-0687">Ribonucleoprotein</keyword>
<keyword id="KW-0689">Ribosomal protein</keyword>
<feature type="chain" id="PRO_1000193865" description="Large ribosomal subunit protein bL19">
    <location>
        <begin position="1"/>
        <end position="145"/>
    </location>
</feature>
<feature type="region of interest" description="Disordered" evidence="2">
    <location>
        <begin position="114"/>
        <end position="145"/>
    </location>
</feature>
<feature type="compositionally biased region" description="Basic and acidic residues" evidence="2">
    <location>
        <begin position="114"/>
        <end position="136"/>
    </location>
</feature>
<evidence type="ECO:0000255" key="1">
    <source>
        <dbReference type="HAMAP-Rule" id="MF_00402"/>
    </source>
</evidence>
<evidence type="ECO:0000256" key="2">
    <source>
        <dbReference type="SAM" id="MobiDB-lite"/>
    </source>
</evidence>
<evidence type="ECO:0000305" key="3"/>
<dbReference type="EMBL" id="CP001280">
    <property type="protein sequence ID" value="ACK49610.1"/>
    <property type="molecule type" value="Genomic_DNA"/>
</dbReference>
<dbReference type="RefSeq" id="WP_012589680.1">
    <property type="nucleotide sequence ID" value="NC_011666.1"/>
</dbReference>
<dbReference type="SMR" id="B8EN97"/>
<dbReference type="STRING" id="395965.Msil_0638"/>
<dbReference type="KEGG" id="msl:Msil_0638"/>
<dbReference type="eggNOG" id="COG0335">
    <property type="taxonomic scope" value="Bacteria"/>
</dbReference>
<dbReference type="HOGENOM" id="CLU_103507_0_2_5"/>
<dbReference type="OrthoDB" id="9803541at2"/>
<dbReference type="Proteomes" id="UP000002257">
    <property type="component" value="Chromosome"/>
</dbReference>
<dbReference type="GO" id="GO:0022625">
    <property type="term" value="C:cytosolic large ribosomal subunit"/>
    <property type="evidence" value="ECO:0007669"/>
    <property type="project" value="TreeGrafter"/>
</dbReference>
<dbReference type="GO" id="GO:0003735">
    <property type="term" value="F:structural constituent of ribosome"/>
    <property type="evidence" value="ECO:0007669"/>
    <property type="project" value="InterPro"/>
</dbReference>
<dbReference type="GO" id="GO:0006412">
    <property type="term" value="P:translation"/>
    <property type="evidence" value="ECO:0007669"/>
    <property type="project" value="UniProtKB-UniRule"/>
</dbReference>
<dbReference type="FunFam" id="2.30.30.790:FF:000001">
    <property type="entry name" value="50S ribosomal protein L19"/>
    <property type="match status" value="1"/>
</dbReference>
<dbReference type="Gene3D" id="2.30.30.790">
    <property type="match status" value="1"/>
</dbReference>
<dbReference type="HAMAP" id="MF_00402">
    <property type="entry name" value="Ribosomal_bL19"/>
    <property type="match status" value="1"/>
</dbReference>
<dbReference type="InterPro" id="IPR001857">
    <property type="entry name" value="Ribosomal_bL19"/>
</dbReference>
<dbReference type="InterPro" id="IPR018257">
    <property type="entry name" value="Ribosomal_bL19_CS"/>
</dbReference>
<dbReference type="InterPro" id="IPR038657">
    <property type="entry name" value="Ribosomal_bL19_sf"/>
</dbReference>
<dbReference type="InterPro" id="IPR008991">
    <property type="entry name" value="Translation_prot_SH3-like_sf"/>
</dbReference>
<dbReference type="NCBIfam" id="TIGR01024">
    <property type="entry name" value="rplS_bact"/>
    <property type="match status" value="1"/>
</dbReference>
<dbReference type="PANTHER" id="PTHR15680:SF9">
    <property type="entry name" value="LARGE RIBOSOMAL SUBUNIT PROTEIN BL19M"/>
    <property type="match status" value="1"/>
</dbReference>
<dbReference type="PANTHER" id="PTHR15680">
    <property type="entry name" value="RIBOSOMAL PROTEIN L19"/>
    <property type="match status" value="1"/>
</dbReference>
<dbReference type="Pfam" id="PF01245">
    <property type="entry name" value="Ribosomal_L19"/>
    <property type="match status" value="1"/>
</dbReference>
<dbReference type="PIRSF" id="PIRSF002191">
    <property type="entry name" value="Ribosomal_L19"/>
    <property type="match status" value="1"/>
</dbReference>
<dbReference type="PRINTS" id="PR00061">
    <property type="entry name" value="RIBOSOMALL19"/>
</dbReference>
<dbReference type="SUPFAM" id="SSF50104">
    <property type="entry name" value="Translation proteins SH3-like domain"/>
    <property type="match status" value="1"/>
</dbReference>
<dbReference type="PROSITE" id="PS01015">
    <property type="entry name" value="RIBOSOMAL_L19"/>
    <property type="match status" value="1"/>
</dbReference>
<proteinExistence type="inferred from homology"/>